<comment type="similarity">
    <text evidence="3">Belongs to the eukaryotic ribosomal protein eL19 family.</text>
</comment>
<comment type="sequence caution" evidence="3">
    <conflict type="erroneous gene model prediction">
        <sequence resource="EMBL-CDS" id="AAC28170"/>
    </conflict>
</comment>
<name>RL193_ARATH</name>
<reference key="1">
    <citation type="journal article" date="1999" name="Nature">
        <title>Sequence and analysis of chromosome 4 of the plant Arabidopsis thaliana.</title>
        <authorList>
            <person name="Mayer K.F.X."/>
            <person name="Schueller C."/>
            <person name="Wambutt R."/>
            <person name="Murphy G."/>
            <person name="Volckaert G."/>
            <person name="Pohl T."/>
            <person name="Duesterhoeft A."/>
            <person name="Stiekema W."/>
            <person name="Entian K.-D."/>
            <person name="Terryn N."/>
            <person name="Harris B."/>
            <person name="Ansorge W."/>
            <person name="Brandt P."/>
            <person name="Grivell L.A."/>
            <person name="Rieger M."/>
            <person name="Weichselgartner M."/>
            <person name="de Simone V."/>
            <person name="Obermaier B."/>
            <person name="Mache R."/>
            <person name="Mueller M."/>
            <person name="Kreis M."/>
            <person name="Delseny M."/>
            <person name="Puigdomenech P."/>
            <person name="Watson M."/>
            <person name="Schmidtheini T."/>
            <person name="Reichert B."/>
            <person name="Portetelle D."/>
            <person name="Perez-Alonso M."/>
            <person name="Boutry M."/>
            <person name="Bancroft I."/>
            <person name="Vos P."/>
            <person name="Hoheisel J."/>
            <person name="Zimmermann W."/>
            <person name="Wedler H."/>
            <person name="Ridley P."/>
            <person name="Langham S.-A."/>
            <person name="McCullagh B."/>
            <person name="Bilham L."/>
            <person name="Robben J."/>
            <person name="van der Schueren J."/>
            <person name="Grymonprez B."/>
            <person name="Chuang Y.-J."/>
            <person name="Vandenbussche F."/>
            <person name="Braeken M."/>
            <person name="Weltjens I."/>
            <person name="Voet M."/>
            <person name="Bastiaens I."/>
            <person name="Aert R."/>
            <person name="Defoor E."/>
            <person name="Weitzenegger T."/>
            <person name="Bothe G."/>
            <person name="Ramsperger U."/>
            <person name="Hilbert H."/>
            <person name="Braun M."/>
            <person name="Holzer E."/>
            <person name="Brandt A."/>
            <person name="Peters S."/>
            <person name="van Staveren M."/>
            <person name="Dirkse W."/>
            <person name="Mooijman P."/>
            <person name="Klein Lankhorst R."/>
            <person name="Rose M."/>
            <person name="Hauf J."/>
            <person name="Koetter P."/>
            <person name="Berneiser S."/>
            <person name="Hempel S."/>
            <person name="Feldpausch M."/>
            <person name="Lamberth S."/>
            <person name="Van den Daele H."/>
            <person name="De Keyser A."/>
            <person name="Buysshaert C."/>
            <person name="Gielen J."/>
            <person name="Villarroel R."/>
            <person name="De Clercq R."/>
            <person name="van Montagu M."/>
            <person name="Rogers J."/>
            <person name="Cronin A."/>
            <person name="Quail M.A."/>
            <person name="Bray-Allen S."/>
            <person name="Clark L."/>
            <person name="Doggett J."/>
            <person name="Hall S."/>
            <person name="Kay M."/>
            <person name="Lennard N."/>
            <person name="McLay K."/>
            <person name="Mayes R."/>
            <person name="Pettett A."/>
            <person name="Rajandream M.A."/>
            <person name="Lyne M."/>
            <person name="Benes V."/>
            <person name="Rechmann S."/>
            <person name="Borkova D."/>
            <person name="Bloecker H."/>
            <person name="Scharfe M."/>
            <person name="Grimm M."/>
            <person name="Loehnert T.-H."/>
            <person name="Dose S."/>
            <person name="de Haan M."/>
            <person name="Maarse A.C."/>
            <person name="Schaefer M."/>
            <person name="Mueller-Auer S."/>
            <person name="Gabel C."/>
            <person name="Fuchs M."/>
            <person name="Fartmann B."/>
            <person name="Granderath K."/>
            <person name="Dauner D."/>
            <person name="Herzl A."/>
            <person name="Neumann S."/>
            <person name="Argiriou A."/>
            <person name="Vitale D."/>
            <person name="Liguori R."/>
            <person name="Piravandi E."/>
            <person name="Massenet O."/>
            <person name="Quigley F."/>
            <person name="Clabauld G."/>
            <person name="Muendlein A."/>
            <person name="Felber R."/>
            <person name="Schnabl S."/>
            <person name="Hiller R."/>
            <person name="Schmidt W."/>
            <person name="Lecharny A."/>
            <person name="Aubourg S."/>
            <person name="Chefdor F."/>
            <person name="Cooke R."/>
            <person name="Berger C."/>
            <person name="Monfort A."/>
            <person name="Casacuberta E."/>
            <person name="Gibbons T."/>
            <person name="Weber N."/>
            <person name="Vandenbol M."/>
            <person name="Bargues M."/>
            <person name="Terol J."/>
            <person name="Torres A."/>
            <person name="Perez-Perez A."/>
            <person name="Purnelle B."/>
            <person name="Bent E."/>
            <person name="Johnson S."/>
            <person name="Tacon D."/>
            <person name="Jesse T."/>
            <person name="Heijnen L."/>
            <person name="Schwarz S."/>
            <person name="Scholler P."/>
            <person name="Heber S."/>
            <person name="Francs P."/>
            <person name="Bielke C."/>
            <person name="Frishman D."/>
            <person name="Haase D."/>
            <person name="Lemcke K."/>
            <person name="Mewes H.-W."/>
            <person name="Stocker S."/>
            <person name="Zaccaria P."/>
            <person name="Bevan M."/>
            <person name="Wilson R.K."/>
            <person name="de la Bastide M."/>
            <person name="Habermann K."/>
            <person name="Parnell L."/>
            <person name="Dedhia N."/>
            <person name="Gnoj L."/>
            <person name="Schutz K."/>
            <person name="Huang E."/>
            <person name="Spiegel L."/>
            <person name="Sekhon M."/>
            <person name="Murray J."/>
            <person name="Sheet P."/>
            <person name="Cordes M."/>
            <person name="Abu-Threideh J."/>
            <person name="Stoneking T."/>
            <person name="Kalicki J."/>
            <person name="Graves T."/>
            <person name="Harmon G."/>
            <person name="Edwards J."/>
            <person name="Latreille P."/>
            <person name="Courtney L."/>
            <person name="Cloud J."/>
            <person name="Abbott A."/>
            <person name="Scott K."/>
            <person name="Johnson D."/>
            <person name="Minx P."/>
            <person name="Bentley D."/>
            <person name="Fulton B."/>
            <person name="Miller N."/>
            <person name="Greco T."/>
            <person name="Kemp K."/>
            <person name="Kramer J."/>
            <person name="Fulton L."/>
            <person name="Mardis E."/>
            <person name="Dante M."/>
            <person name="Pepin K."/>
            <person name="Hillier L.W."/>
            <person name="Nelson J."/>
            <person name="Spieth J."/>
            <person name="Ryan E."/>
            <person name="Andrews S."/>
            <person name="Geisel C."/>
            <person name="Layman D."/>
            <person name="Du H."/>
            <person name="Ali J."/>
            <person name="Berghoff A."/>
            <person name="Jones K."/>
            <person name="Drone K."/>
            <person name="Cotton M."/>
            <person name="Joshu C."/>
            <person name="Antonoiu B."/>
            <person name="Zidanic M."/>
            <person name="Strong C."/>
            <person name="Sun H."/>
            <person name="Lamar B."/>
            <person name="Yordan C."/>
            <person name="Ma P."/>
            <person name="Zhong J."/>
            <person name="Preston R."/>
            <person name="Vil D."/>
            <person name="Shekher M."/>
            <person name="Matero A."/>
            <person name="Shah R."/>
            <person name="Swaby I.K."/>
            <person name="O'Shaughnessy A."/>
            <person name="Rodriguez M."/>
            <person name="Hoffman J."/>
            <person name="Till S."/>
            <person name="Granat S."/>
            <person name="Shohdy N."/>
            <person name="Hasegawa A."/>
            <person name="Hameed A."/>
            <person name="Lodhi M."/>
            <person name="Johnson A."/>
            <person name="Chen E."/>
            <person name="Marra M.A."/>
            <person name="Martienssen R."/>
            <person name="McCombie W.R."/>
        </authorList>
    </citation>
    <scope>NUCLEOTIDE SEQUENCE [LARGE SCALE GENOMIC DNA]</scope>
    <source>
        <strain>cv. Columbia</strain>
    </source>
</reference>
<reference key="2">
    <citation type="journal article" date="2017" name="Plant J.">
        <title>Araport11: a complete reannotation of the Arabidopsis thaliana reference genome.</title>
        <authorList>
            <person name="Cheng C.Y."/>
            <person name="Krishnakumar V."/>
            <person name="Chan A.P."/>
            <person name="Thibaud-Nissen F."/>
            <person name="Schobel S."/>
            <person name="Town C.D."/>
        </authorList>
    </citation>
    <scope>GENOME REANNOTATION</scope>
    <source>
        <strain>cv. Columbia</strain>
    </source>
</reference>
<reference key="3">
    <citation type="journal article" date="2003" name="Science">
        <title>Empirical analysis of transcriptional activity in the Arabidopsis genome.</title>
        <authorList>
            <person name="Yamada K."/>
            <person name="Lim J."/>
            <person name="Dale J.M."/>
            <person name="Chen H."/>
            <person name="Shinn P."/>
            <person name="Palm C.J."/>
            <person name="Southwick A.M."/>
            <person name="Wu H.C."/>
            <person name="Kim C.J."/>
            <person name="Nguyen M."/>
            <person name="Pham P.K."/>
            <person name="Cheuk R.F."/>
            <person name="Karlin-Newmann G."/>
            <person name="Liu S.X."/>
            <person name="Lam B."/>
            <person name="Sakano H."/>
            <person name="Wu T."/>
            <person name="Yu G."/>
            <person name="Miranda M."/>
            <person name="Quach H.L."/>
            <person name="Tripp M."/>
            <person name="Chang C.H."/>
            <person name="Lee J.M."/>
            <person name="Toriumi M.J."/>
            <person name="Chan M.M."/>
            <person name="Tang C.C."/>
            <person name="Onodera C.S."/>
            <person name="Deng J.M."/>
            <person name="Akiyama K."/>
            <person name="Ansari Y."/>
            <person name="Arakawa T."/>
            <person name="Banh J."/>
            <person name="Banno F."/>
            <person name="Bowser L."/>
            <person name="Brooks S.Y."/>
            <person name="Carninci P."/>
            <person name="Chao Q."/>
            <person name="Choy N."/>
            <person name="Enju A."/>
            <person name="Goldsmith A.D."/>
            <person name="Gurjal M."/>
            <person name="Hansen N.F."/>
            <person name="Hayashizaki Y."/>
            <person name="Johnson-Hopson C."/>
            <person name="Hsuan V.W."/>
            <person name="Iida K."/>
            <person name="Karnes M."/>
            <person name="Khan S."/>
            <person name="Koesema E."/>
            <person name="Ishida J."/>
            <person name="Jiang P.X."/>
            <person name="Jones T."/>
            <person name="Kawai J."/>
            <person name="Kamiya A."/>
            <person name="Meyers C."/>
            <person name="Nakajima M."/>
            <person name="Narusaka M."/>
            <person name="Seki M."/>
            <person name="Sakurai T."/>
            <person name="Satou M."/>
            <person name="Tamse R."/>
            <person name="Vaysberg M."/>
            <person name="Wallender E.K."/>
            <person name="Wong C."/>
            <person name="Yamamura Y."/>
            <person name="Yuan S."/>
            <person name="Shinozaki K."/>
            <person name="Davis R.W."/>
            <person name="Theologis A."/>
            <person name="Ecker J.R."/>
        </authorList>
    </citation>
    <scope>NUCLEOTIDE SEQUENCE [LARGE SCALE MRNA]</scope>
    <source>
        <strain>cv. Columbia</strain>
    </source>
</reference>
<reference key="4">
    <citation type="journal article" date="1993" name="Plant J.">
        <title>An inventory of 1152 expressed sequence tags obtained by partial sequencing of cDNAs from Arabidopsis thaliana.</title>
        <authorList>
            <person name="Hoefte H."/>
            <person name="Desprez T."/>
            <person name="Amselem J."/>
            <person name="Chiapello H."/>
            <person name="Rouze P."/>
            <person name="Caboche M."/>
            <person name="Moisan A."/>
            <person name="Jourjon M.-F."/>
            <person name="Charpenteau J.-L."/>
            <person name="Berthomieu P."/>
            <person name="Guerrier D."/>
            <person name="Giraudat J."/>
            <person name="Quigley F."/>
            <person name="Thomas F."/>
            <person name="Yu D.-Y."/>
            <person name="Mache R."/>
            <person name="Raynal M."/>
            <person name="Cooke R."/>
            <person name="Grellet F."/>
            <person name="Delseny M."/>
            <person name="Parmentier Y."/>
            <person name="de Marcillac G."/>
            <person name="Gigot C."/>
            <person name="Fleck J."/>
            <person name="Philipps G."/>
            <person name="Axelos M."/>
            <person name="Bardet C."/>
            <person name="Tremousaygue D."/>
            <person name="Lescure B."/>
        </authorList>
    </citation>
    <scope>NUCLEOTIDE SEQUENCE [LARGE SCALE MRNA] OF 4-85</scope>
    <source>
        <strain>cv. Columbia</strain>
    </source>
</reference>
<reference key="5">
    <citation type="journal article" date="2001" name="Plant Physiol.">
        <title>The organization of cytoplasmic ribosomal protein genes in the Arabidopsis genome.</title>
        <authorList>
            <person name="Barakat A."/>
            <person name="Szick-Miranda K."/>
            <person name="Chang I.-F."/>
            <person name="Guyot R."/>
            <person name="Blanc G."/>
            <person name="Cooke R."/>
            <person name="Delseny M."/>
            <person name="Bailey-Serres J."/>
        </authorList>
    </citation>
    <scope>GENE FAMILY ORGANIZATION</scope>
    <scope>NOMENCLATURE</scope>
</reference>
<reference key="6">
    <citation type="journal article" date="2023" name="Plant Cell">
        <title>An updated nomenclature for plant ribosomal protein genes.</title>
        <authorList>
            <person name="Scarpin M.R."/>
            <person name="Busche M."/>
            <person name="Martinez R.E."/>
            <person name="Harper L.C."/>
            <person name="Reiser L."/>
            <person name="Szakonyi D."/>
            <person name="Merchante C."/>
            <person name="Lan T."/>
            <person name="Xiong W."/>
            <person name="Mo B."/>
            <person name="Tang G."/>
            <person name="Chen X."/>
            <person name="Bailey-Serres J."/>
            <person name="Browning K.S."/>
            <person name="Brunkard J.O."/>
        </authorList>
    </citation>
    <scope>NOMENCLATURE</scope>
</reference>
<proteinExistence type="evidence at transcript level"/>
<evidence type="ECO:0000256" key="1">
    <source>
        <dbReference type="SAM" id="MobiDB-lite"/>
    </source>
</evidence>
<evidence type="ECO:0000303" key="2">
    <source>
    </source>
</evidence>
<evidence type="ECO:0000305" key="3"/>
<dbReference type="EMBL" id="AF075597">
    <property type="protein sequence ID" value="AAC28170.1"/>
    <property type="status" value="ALT_SEQ"/>
    <property type="molecule type" value="Genomic_DNA"/>
</dbReference>
<dbReference type="EMBL" id="AL161494">
    <property type="protein sequence ID" value="CAB80716.1"/>
    <property type="molecule type" value="Genomic_DNA"/>
</dbReference>
<dbReference type="EMBL" id="CP002687">
    <property type="protein sequence ID" value="AEE82143.1"/>
    <property type="molecule type" value="Genomic_DNA"/>
</dbReference>
<dbReference type="EMBL" id="AF386993">
    <property type="protein sequence ID" value="AAK62438.1"/>
    <property type="molecule type" value="mRNA"/>
</dbReference>
<dbReference type="EMBL" id="AY072494">
    <property type="protein sequence ID" value="AAL66909.1"/>
    <property type="molecule type" value="mRNA"/>
</dbReference>
<dbReference type="EMBL" id="Z17981">
    <property type="protein sequence ID" value="CAA79080.1"/>
    <property type="molecule type" value="mRNA"/>
</dbReference>
<dbReference type="PIR" id="E85028">
    <property type="entry name" value="E85028"/>
</dbReference>
<dbReference type="PIR" id="T01426">
    <property type="entry name" value="T01426"/>
</dbReference>
<dbReference type="RefSeq" id="NP_192132.1">
    <property type="nucleotide sequence ID" value="NM_116456.4"/>
</dbReference>
<dbReference type="SMR" id="P49693"/>
<dbReference type="BioGRID" id="13389">
    <property type="interactions" value="128"/>
</dbReference>
<dbReference type="FunCoup" id="P49693">
    <property type="interactions" value="4085"/>
</dbReference>
<dbReference type="STRING" id="3702.P49693"/>
<dbReference type="iPTMnet" id="P49693"/>
<dbReference type="PaxDb" id="3702-AT4G02230.1"/>
<dbReference type="ProteomicsDB" id="236206"/>
<dbReference type="EnsemblPlants" id="AT4G02230.1">
    <property type="protein sequence ID" value="AT4G02230.1"/>
    <property type="gene ID" value="AT4G02230"/>
</dbReference>
<dbReference type="GeneID" id="828099"/>
<dbReference type="Gramene" id="AT4G02230.1">
    <property type="protein sequence ID" value="AT4G02230.1"/>
    <property type="gene ID" value="AT4G02230"/>
</dbReference>
<dbReference type="KEGG" id="ath:AT4G02230"/>
<dbReference type="Araport" id="AT4G02230"/>
<dbReference type="TAIR" id="AT4G02230"/>
<dbReference type="eggNOG" id="KOG1696">
    <property type="taxonomic scope" value="Eukaryota"/>
</dbReference>
<dbReference type="HOGENOM" id="CLU_083919_0_1_1"/>
<dbReference type="InParanoid" id="P49693"/>
<dbReference type="OMA" id="NIWLDPN"/>
<dbReference type="OrthoDB" id="1099856at2759"/>
<dbReference type="PhylomeDB" id="P49693"/>
<dbReference type="PRO" id="PR:P49693"/>
<dbReference type="Proteomes" id="UP000006548">
    <property type="component" value="Chromosome 4"/>
</dbReference>
<dbReference type="ExpressionAtlas" id="P49693">
    <property type="expression patterns" value="baseline and differential"/>
</dbReference>
<dbReference type="GO" id="GO:0005829">
    <property type="term" value="C:cytosol"/>
    <property type="evidence" value="ECO:0007005"/>
    <property type="project" value="TAIR"/>
</dbReference>
<dbReference type="GO" id="GO:0022625">
    <property type="term" value="C:cytosolic large ribosomal subunit"/>
    <property type="evidence" value="ECO:0007005"/>
    <property type="project" value="TAIR"/>
</dbReference>
<dbReference type="GO" id="GO:0022626">
    <property type="term" value="C:cytosolic ribosome"/>
    <property type="evidence" value="ECO:0007005"/>
    <property type="project" value="TAIR"/>
</dbReference>
<dbReference type="GO" id="GO:0003729">
    <property type="term" value="F:mRNA binding"/>
    <property type="evidence" value="ECO:0000314"/>
    <property type="project" value="TAIR"/>
</dbReference>
<dbReference type="GO" id="GO:0003735">
    <property type="term" value="F:structural constituent of ribosome"/>
    <property type="evidence" value="ECO:0000314"/>
    <property type="project" value="CAFA"/>
</dbReference>
<dbReference type="GO" id="GO:0006412">
    <property type="term" value="P:translation"/>
    <property type="evidence" value="ECO:0007669"/>
    <property type="project" value="InterPro"/>
</dbReference>
<dbReference type="CDD" id="cd01417">
    <property type="entry name" value="Ribosomal_L19e_E"/>
    <property type="match status" value="1"/>
</dbReference>
<dbReference type="FunFam" id="1.10.1200.240:FF:000001">
    <property type="entry name" value="Ribosomal protein L19"/>
    <property type="match status" value="1"/>
</dbReference>
<dbReference type="FunFam" id="1.10.1650.10:FF:000001">
    <property type="entry name" value="Ribosomal protein L19"/>
    <property type="match status" value="1"/>
</dbReference>
<dbReference type="Gene3D" id="1.10.1200.240">
    <property type="match status" value="1"/>
</dbReference>
<dbReference type="Gene3D" id="1.10.1650.10">
    <property type="match status" value="1"/>
</dbReference>
<dbReference type="HAMAP" id="MF_01475">
    <property type="entry name" value="Ribosomal_eL19"/>
    <property type="match status" value="1"/>
</dbReference>
<dbReference type="InterPro" id="IPR035970">
    <property type="entry name" value="60S_ribosomal_eL19_sf"/>
</dbReference>
<dbReference type="InterPro" id="IPR039547">
    <property type="entry name" value="Ribosomal_eL19"/>
</dbReference>
<dbReference type="InterPro" id="IPR023638">
    <property type="entry name" value="Ribosomal_eL19_CS"/>
</dbReference>
<dbReference type="InterPro" id="IPR000196">
    <property type="entry name" value="Ribosomal_eL19_dom"/>
</dbReference>
<dbReference type="InterPro" id="IPR015972">
    <property type="entry name" value="Ribosomal_eL19_dom1"/>
</dbReference>
<dbReference type="InterPro" id="IPR033935">
    <property type="entry name" value="Ribosomal_eL19_euk"/>
</dbReference>
<dbReference type="NCBIfam" id="NF006343">
    <property type="entry name" value="PRK08570.1"/>
    <property type="match status" value="1"/>
</dbReference>
<dbReference type="PANTHER" id="PTHR10722">
    <property type="entry name" value="60S RIBOSOMAL PROTEIN L19"/>
    <property type="match status" value="1"/>
</dbReference>
<dbReference type="Pfam" id="PF01280">
    <property type="entry name" value="Ribosomal_L19e"/>
    <property type="match status" value="1"/>
</dbReference>
<dbReference type="Pfam" id="PF25476">
    <property type="entry name" value="Ribosomal_L19e_C"/>
    <property type="match status" value="1"/>
</dbReference>
<dbReference type="SMART" id="SM01416">
    <property type="entry name" value="Ribosomal_L19e"/>
    <property type="match status" value="1"/>
</dbReference>
<dbReference type="SUPFAM" id="SSF48140">
    <property type="entry name" value="Ribosomal protein L19 (L19e)"/>
    <property type="match status" value="1"/>
</dbReference>
<dbReference type="PROSITE" id="PS00526">
    <property type="entry name" value="RIBOSOMAL_L19E"/>
    <property type="match status" value="1"/>
</dbReference>
<accession>P49693</accession>
<accession>O81422</accession>
<accession>Q9M114</accession>
<sequence length="208" mass="24202">MVSLKLQKRLASSVLKCGKRKVWLDPNEGSDISMANSRQNIRKLVKDGFIIRKPTKIHSRSRARQLNIAKRKGRHSGYGKRKGTREARLPTKVLWMRRMRVLRRLLKKYRETKKIDRHMYHDMYMKVKGNVFKNKRVLMESIHKSKAEKAREKTLSDQFEAKRAKNKASRERKHARREERLAKGPGGDIPAAAPPAQTAEVPAKKSKK</sequence>
<organism>
    <name type="scientific">Arabidopsis thaliana</name>
    <name type="common">Mouse-ear cress</name>
    <dbReference type="NCBI Taxonomy" id="3702"/>
    <lineage>
        <taxon>Eukaryota</taxon>
        <taxon>Viridiplantae</taxon>
        <taxon>Streptophyta</taxon>
        <taxon>Embryophyta</taxon>
        <taxon>Tracheophyta</taxon>
        <taxon>Spermatophyta</taxon>
        <taxon>Magnoliopsida</taxon>
        <taxon>eudicotyledons</taxon>
        <taxon>Gunneridae</taxon>
        <taxon>Pentapetalae</taxon>
        <taxon>rosids</taxon>
        <taxon>malvids</taxon>
        <taxon>Brassicales</taxon>
        <taxon>Brassicaceae</taxon>
        <taxon>Camelineae</taxon>
        <taxon>Arabidopsis</taxon>
    </lineage>
</organism>
<feature type="chain" id="PRO_0000131181" description="Large ribosomal subunit protein eL19y">
    <location>
        <begin position="1"/>
        <end position="208"/>
    </location>
</feature>
<feature type="region of interest" description="Disordered" evidence="1">
    <location>
        <begin position="144"/>
        <end position="208"/>
    </location>
</feature>
<feature type="compositionally biased region" description="Basic and acidic residues" evidence="1">
    <location>
        <begin position="144"/>
        <end position="163"/>
    </location>
</feature>
<feature type="compositionally biased region" description="Basic residues" evidence="1">
    <location>
        <begin position="164"/>
        <end position="175"/>
    </location>
</feature>
<feature type="sequence conflict" description="In Ref. 4; CAA79080." evidence="3" ref="4">
    <original>A</original>
    <variation>R</variation>
    <location>
        <position position="11"/>
    </location>
</feature>
<feature type="sequence conflict" description="In Ref. 4." evidence="3" ref="4">
    <original>KGTR</original>
    <variation>NGYP</variation>
    <location>
        <begin position="82"/>
        <end position="85"/>
    </location>
</feature>
<keyword id="KW-1185">Reference proteome</keyword>
<keyword id="KW-0687">Ribonucleoprotein</keyword>
<keyword id="KW-0689">Ribosomal protein</keyword>
<gene>
    <name type="primary">RPL19C</name>
    <name type="ordered locus">At4g02230</name>
    <name type="ORF">T2H3.3</name>
</gene>
<protein>
    <recommendedName>
        <fullName evidence="2">Large ribosomal subunit protein eL19y</fullName>
    </recommendedName>
    <alternativeName>
        <fullName>60S ribosomal protein L19-3</fullName>
    </alternativeName>
</protein>